<keyword id="KW-0255">Endonuclease</keyword>
<keyword id="KW-0378">Hydrolase</keyword>
<keyword id="KW-0460">Magnesium</keyword>
<keyword id="KW-0479">Metal-binding</keyword>
<keyword id="KW-0540">Nuclease</keyword>
<protein>
    <recommendedName>
        <fullName>Ribonuclease H</fullName>
        <shortName>RNase H</shortName>
        <ecNumber>3.1.26.4</ecNumber>
    </recommendedName>
</protein>
<comment type="function">
    <text>Endonuclease that specifically degrades the RNA of RNA-DNA hybrids.</text>
</comment>
<comment type="catalytic activity">
    <reaction evidence="2">
        <text>Endonucleolytic cleavage to 5'-phosphomonoester.</text>
        <dbReference type="EC" id="3.1.26.4"/>
    </reaction>
</comment>
<comment type="cofactor">
    <cofactor evidence="1">
        <name>Mg(2+)</name>
        <dbReference type="ChEBI" id="CHEBI:18420"/>
    </cofactor>
    <text evidence="1">Binds 1 Mg(2+) ion per subunit. May bind a second metal ion at a regulatory site, or after substrate binding.</text>
</comment>
<comment type="subunit">
    <text>Monomer.</text>
</comment>
<comment type="similarity">
    <text evidence="4">Belongs to the RNase H family.</text>
</comment>
<name>RNH1_CRIFA</name>
<feature type="chain" id="PRO_0000195436" description="Ribonuclease H">
    <location>
        <begin position="1"/>
        <end position="494"/>
    </location>
</feature>
<feature type="domain" description="RNase H type-1" evidence="2">
    <location>
        <begin position="272"/>
        <end position="488"/>
    </location>
</feature>
<feature type="region of interest" description="Disordered" evidence="3">
    <location>
        <begin position="79"/>
        <end position="148"/>
    </location>
</feature>
<feature type="region of interest" description="Disordered" evidence="3">
    <location>
        <begin position="205"/>
        <end position="231"/>
    </location>
</feature>
<feature type="compositionally biased region" description="Polar residues" evidence="3">
    <location>
        <begin position="84"/>
        <end position="100"/>
    </location>
</feature>
<feature type="compositionally biased region" description="Polar residues" evidence="3">
    <location>
        <begin position="131"/>
        <end position="143"/>
    </location>
</feature>
<feature type="binding site" evidence="2">
    <location>
        <position position="281"/>
    </location>
    <ligand>
        <name>Mg(2+)</name>
        <dbReference type="ChEBI" id="CHEBI:18420"/>
        <label>1</label>
    </ligand>
</feature>
<feature type="binding site" evidence="2">
    <location>
        <position position="281"/>
    </location>
    <ligand>
        <name>Mg(2+)</name>
        <dbReference type="ChEBI" id="CHEBI:18420"/>
        <label>2</label>
    </ligand>
</feature>
<feature type="binding site" evidence="2">
    <location>
        <position position="325"/>
    </location>
    <ligand>
        <name>Mg(2+)</name>
        <dbReference type="ChEBI" id="CHEBI:18420"/>
        <label>1</label>
    </ligand>
</feature>
<feature type="binding site" evidence="2">
    <location>
        <position position="374"/>
    </location>
    <ligand>
        <name>Mg(2+)</name>
        <dbReference type="ChEBI" id="CHEBI:18420"/>
        <label>1</label>
    </ligand>
</feature>
<feature type="binding site" evidence="2">
    <location>
        <position position="480"/>
    </location>
    <ligand>
        <name>Mg(2+)</name>
        <dbReference type="ChEBI" id="CHEBI:18420"/>
        <label>2</label>
    </ligand>
</feature>
<evidence type="ECO:0000250" key="1"/>
<evidence type="ECO:0000255" key="2">
    <source>
        <dbReference type="PROSITE-ProRule" id="PRU00408"/>
    </source>
</evidence>
<evidence type="ECO:0000256" key="3">
    <source>
        <dbReference type="SAM" id="MobiDB-lite"/>
    </source>
</evidence>
<evidence type="ECO:0000305" key="4"/>
<proteinExistence type="inferred from homology"/>
<sequence length="494" mass="53704">MRRVALSVLFQSSRVLHFTDLRDKQIALCNAAPGHTVQFHQHRRHSSAPVSSVGGQNTFSCLGASCAGLLHPSRVRFANRRRSGSTSKKAQVKSSVNQLAIPSAATRERRKPKLSNSCAPAVESQKVGVAPTTSRASGETRTSCAPPPASRMKPSFYVVAVGRQRGIYSTWDQCSEQVKGFSGAVYKSFRTLSEARAYLTAHPARSGLEKSDRGDGAASLSALSEPQVGLRRSRAAEAEASYVVEAPAQPTLRQRVEEEVPSGAAAVQRAESSVPQVVYVDGACSHNGTPKARAGYGGFYGSTSDSRNFSLPVPITEAQTNNRGEMRAVIHCIVQGFVDAGVPPAALGTSHCVEPDWELSELPQPLRRLVIYTDSRYVIDGLTRYALKWVANGFKLASKEPVLNQDLWRQLIRLRDAYNTRYAEQQHWAAATCSHASTRVPAASQSKRFHTHNTRNDETEGIELRHVKGHSNDYGNEMADVLAVAGARMHGTSE</sequence>
<accession>Q07762</accession>
<organism>
    <name type="scientific">Crithidia fasciculata</name>
    <dbReference type="NCBI Taxonomy" id="5656"/>
    <lineage>
        <taxon>Eukaryota</taxon>
        <taxon>Discoba</taxon>
        <taxon>Euglenozoa</taxon>
        <taxon>Kinetoplastea</taxon>
        <taxon>Metakinetoplastina</taxon>
        <taxon>Trypanosomatida</taxon>
        <taxon>Trypanosomatidae</taxon>
        <taxon>Leishmaniinae</taxon>
        <taxon>Crithidia</taxon>
    </lineage>
</organism>
<gene>
    <name type="primary">RNH1</name>
</gene>
<reference key="1">
    <citation type="journal article" date="1993" name="Proc. Natl. Acad. Sci. U.S.A.">
        <title>Functional complementation of an Escherichia coli ribonuclease H mutation by a cloned genomic fragment from the trypanosomatid Crithidia fasciculata.</title>
        <authorList>
            <person name="Campbell A.G."/>
            <person name="Ray D.S."/>
        </authorList>
    </citation>
    <scope>NUCLEOTIDE SEQUENCE [GENOMIC DNA]</scope>
    <source>
        <strain>C1</strain>
    </source>
</reference>
<dbReference type="EC" id="3.1.26.4"/>
<dbReference type="EMBL" id="L18916">
    <property type="protein sequence ID" value="AAA03546.1"/>
    <property type="molecule type" value="Genomic_DNA"/>
</dbReference>
<dbReference type="PIR" id="A48683">
    <property type="entry name" value="A48683"/>
</dbReference>
<dbReference type="SMR" id="Q07762"/>
<dbReference type="VEuPathDB" id="TriTrypDB:CFAC1_220025400"/>
<dbReference type="GO" id="GO:0046872">
    <property type="term" value="F:metal ion binding"/>
    <property type="evidence" value="ECO:0007669"/>
    <property type="project" value="UniProtKB-KW"/>
</dbReference>
<dbReference type="GO" id="GO:0003676">
    <property type="term" value="F:nucleic acid binding"/>
    <property type="evidence" value="ECO:0007669"/>
    <property type="project" value="InterPro"/>
</dbReference>
<dbReference type="GO" id="GO:0004523">
    <property type="term" value="F:RNA-DNA hybrid ribonuclease activity"/>
    <property type="evidence" value="ECO:0007669"/>
    <property type="project" value="UniProtKB-EC"/>
</dbReference>
<dbReference type="GO" id="GO:0043137">
    <property type="term" value="P:DNA replication, removal of RNA primer"/>
    <property type="evidence" value="ECO:0007669"/>
    <property type="project" value="TreeGrafter"/>
</dbReference>
<dbReference type="CDD" id="cd09280">
    <property type="entry name" value="RNase_HI_eukaryote_like"/>
    <property type="match status" value="1"/>
</dbReference>
<dbReference type="FunFam" id="3.40.970.10:FF:000002">
    <property type="entry name" value="Ribonuclease H"/>
    <property type="match status" value="1"/>
</dbReference>
<dbReference type="FunFam" id="3.30.420.10:FF:000202">
    <property type="entry name" value="Ribonuclease H1, putative"/>
    <property type="match status" value="1"/>
</dbReference>
<dbReference type="Gene3D" id="3.30.420.10">
    <property type="entry name" value="Ribonuclease H-like superfamily/Ribonuclease H"/>
    <property type="match status" value="1"/>
</dbReference>
<dbReference type="Gene3D" id="3.40.970.10">
    <property type="entry name" value="Ribonuclease H1, N-terminal domain"/>
    <property type="match status" value="1"/>
</dbReference>
<dbReference type="InterPro" id="IPR009027">
    <property type="entry name" value="Ribosomal_bL9/RNase_H1_N"/>
</dbReference>
<dbReference type="InterPro" id="IPR050092">
    <property type="entry name" value="RNase_H"/>
</dbReference>
<dbReference type="InterPro" id="IPR011320">
    <property type="entry name" value="RNase_H1_N"/>
</dbReference>
<dbReference type="InterPro" id="IPR037056">
    <property type="entry name" value="RNase_H1_N_sf"/>
</dbReference>
<dbReference type="InterPro" id="IPR012337">
    <property type="entry name" value="RNaseH-like_sf"/>
</dbReference>
<dbReference type="InterPro" id="IPR002156">
    <property type="entry name" value="RNaseH_domain"/>
</dbReference>
<dbReference type="InterPro" id="IPR036397">
    <property type="entry name" value="RNaseH_sf"/>
</dbReference>
<dbReference type="PANTHER" id="PTHR10642">
    <property type="entry name" value="RIBONUCLEASE H1"/>
    <property type="match status" value="1"/>
</dbReference>
<dbReference type="PANTHER" id="PTHR10642:SF26">
    <property type="entry name" value="RIBONUCLEASE H1"/>
    <property type="match status" value="1"/>
</dbReference>
<dbReference type="Pfam" id="PF01693">
    <property type="entry name" value="Cauli_VI"/>
    <property type="match status" value="1"/>
</dbReference>
<dbReference type="Pfam" id="PF00075">
    <property type="entry name" value="RNase_H"/>
    <property type="match status" value="2"/>
</dbReference>
<dbReference type="SUPFAM" id="SSF55658">
    <property type="entry name" value="L9 N-domain-like"/>
    <property type="match status" value="1"/>
</dbReference>
<dbReference type="SUPFAM" id="SSF53098">
    <property type="entry name" value="Ribonuclease H-like"/>
    <property type="match status" value="1"/>
</dbReference>
<dbReference type="PROSITE" id="PS50879">
    <property type="entry name" value="RNASE_H_1"/>
    <property type="match status" value="1"/>
</dbReference>